<keyword id="KW-0167">Capsid protein</keyword>
<keyword id="KW-0175">Coiled coil</keyword>
<keyword id="KW-1032">Host cell membrane</keyword>
<keyword id="KW-1043">Host membrane</keyword>
<keyword id="KW-0449">Lipoprotein</keyword>
<keyword id="KW-0472">Membrane</keyword>
<keyword id="KW-0479">Metal-binding</keyword>
<keyword id="KW-0519">Myristate</keyword>
<keyword id="KW-0597">Phosphoprotein</keyword>
<keyword id="KW-0694">RNA-binding</keyword>
<keyword id="KW-0468">Viral matrix protein</keyword>
<keyword id="KW-0543">Viral nucleoprotein</keyword>
<keyword id="KW-0946">Virion</keyword>
<keyword id="KW-0862">Zinc</keyword>
<keyword id="KW-0863">Zinc-finger</keyword>
<proteinExistence type="inferred from homology"/>
<protein>
    <recommendedName>
        <fullName>Gag polyprotein</fullName>
    </recommendedName>
    <alternativeName>
        <fullName>Core polyprotein</fullName>
    </alternativeName>
    <component>
        <recommendedName>
            <fullName>Matrix protein p15</fullName>
            <shortName>MA</shortName>
        </recommendedName>
    </component>
    <component>
        <recommendedName>
            <fullName>RNA-binding phosphoprotein p12</fullName>
        </recommendedName>
        <alternativeName>
            <fullName>pp12</fullName>
        </alternativeName>
    </component>
    <component>
        <recommendedName>
            <fullName>Capsid protein p30</fullName>
            <shortName>CA</shortName>
        </recommendedName>
    </component>
    <component>
        <recommendedName>
            <fullName>Nucleocapsid protein p10-gag</fullName>
            <shortName>NC-gag</shortName>
        </recommendedName>
    </component>
</protein>
<comment type="function">
    <molecule>Gag polyprotein</molecule>
    <text evidence="2">Plays a role in budding and is processed by the viral protease during virion maturation outside the cell. During budding, it recruits, in a PPXY-dependent or independent manner, Nedd4-like ubiquitin ligases that conjugate ubiquitin molecules to Gag, or to Gag binding host factors. Interaction with HECT ubiquitin ligases probably links the viral protein to the host ESCRT pathway and facilitates release.</text>
</comment>
<comment type="function">
    <molecule>Matrix protein p15</molecule>
    <text evidence="2">Targets Gag and gag-pol polyproteins to the plasma membrane via a multipartite membrane binding signal, that includes its myristoylated N-terminus. Also mediates nuclear localization of the pre-integration complex.</text>
</comment>
<comment type="function">
    <molecule>RNA-binding phosphoprotein p12</molecule>
    <text evidence="2">Constituent of the pre-integration complex (PIC) which tethers the latter to mitotic chromosomes.</text>
</comment>
<comment type="function">
    <molecule>Capsid protein p30</molecule>
    <text evidence="2">Forms the spherical core of the virion that encapsulates the genomic RNA-nucleocapsid complex.</text>
</comment>
<comment type="function">
    <molecule>Nucleocapsid protein p10-gag</molecule>
    <text evidence="2">Involved in the packaging and encapsidation of two copies of the genome. Binds with high affinity to conserved UCUG elements within the packaging signal, located near the 5'-end of the genome. This binding is dependent on genome dimerization.</text>
</comment>
<comment type="subunit">
    <molecule>Gag polyprotein</molecule>
    <text evidence="2">Interacts (via PPXY motif) with host NEDD4.</text>
</comment>
<comment type="subunit">
    <molecule>Capsid protein p30</molecule>
    <text evidence="3">Homohexamer. Further associates as homomultimer (By similarity). The virus core is composed of a lattice formed from hexagonal rings, each containing six capsid monomers (By similarity).</text>
</comment>
<comment type="subcellular location">
    <molecule>Gag polyprotein</molecule>
    <subcellularLocation>
        <location evidence="1">Virion</location>
    </subcellularLocation>
    <subcellularLocation>
        <location evidence="7">Host cell membrane</location>
        <topology evidence="7">Lipid-anchor</topology>
    </subcellularLocation>
</comment>
<comment type="subcellular location">
    <molecule>Matrix protein p15</molecule>
    <subcellularLocation>
        <location evidence="7">Virion</location>
    </subcellularLocation>
</comment>
<comment type="subcellular location">
    <molecule>Capsid protein p30</molecule>
    <subcellularLocation>
        <location evidence="7">Virion</location>
    </subcellularLocation>
</comment>
<comment type="subcellular location">
    <molecule>Nucleocapsid protein p10-gag</molecule>
    <subcellularLocation>
        <location evidence="7">Virion</location>
    </subcellularLocation>
</comment>
<comment type="domain">
    <molecule>Gag polyprotein</molecule>
    <text evidence="2">Late-budding domains (L domains) are short sequence motifs essential for viral particle budding. They recruit proteins of the host ESCRT machinery (Endosomal Sorting Complex Required for Transport) or ESCRT-associated proteins. RNA-binding phosphoprotein p12 contains one L domain: a PPXY motif which interacts with the WW domain 3 of NEDD4 E3 ubiquitin ligase. PPXY motif is essential for virus egress.</text>
</comment>
<comment type="PTM">
    <molecule>Gag polyprotein</molecule>
    <text evidence="2">Specific enzymatic cleavages by the viral protease yield mature proteins. The protease is released by autocatalytic cleavage. The polyprotein is cleaved during and after budding, this process is termed maturation.</text>
</comment>
<sequence length="536" mass="60891">MGQTITTPLSLTLEHWRDVQCIASNQSVDVKRRRWVTFCSVEWPSFDVGWPLDGTFNLDIILQVKSKVFCPGPHGHPDQVPYIVTWEALAYHPPPWVKPFVSPKPFPLSTLPFSPPGPSAHPPSRSDLYTALIPSIKTKPPKSRVLPTNGGPLIDLLTENPPNLGEQGPPLPKGPVKKRRPPPPRYSPPGPMVSRLRGNRDPPAADSTTSRAFPLRLGGNGQLQYWPFSSSDLYNWKNNNPSFSEDPGKLTALIESVLTTHQPTWDDCQQLLGTLLTGEEKQRVLLEARKAVRGNDGRPTQLPNEVNSAFPLERPDWDYTTPEGRNHLVLYRQLLLAGLQNAGRSPTNLAKVKGITQGPSESPSAFLERLKEAYRRYTPYDPEDPGQETNVSMSFIWQSAPDIGRKLERLEDLKSKTLGDLVREAEKIFNKRETPEEREERIRRETEEKEERRRAEDEQREKERDRRRHREMSKFLATVVTGQRQDRQGGERRRPQLDKDQCAYCKEKGHWAKDCPKKPRGPRGPRPQTSLLTLGD</sequence>
<dbReference type="EMBL" id="M64096">
    <property type="protein sequence ID" value="AAA46509.1"/>
    <property type="status" value="ALT_SEQ"/>
    <property type="molecule type" value="Genomic_DNA"/>
</dbReference>
<dbReference type="PIR" id="B40416">
    <property type="entry name" value="FOMVME"/>
</dbReference>
<dbReference type="SMR" id="P29168"/>
<dbReference type="GO" id="GO:0020002">
    <property type="term" value="C:host cell plasma membrane"/>
    <property type="evidence" value="ECO:0007669"/>
    <property type="project" value="UniProtKB-SubCell"/>
</dbReference>
<dbReference type="GO" id="GO:0016020">
    <property type="term" value="C:membrane"/>
    <property type="evidence" value="ECO:0007669"/>
    <property type="project" value="UniProtKB-KW"/>
</dbReference>
<dbReference type="GO" id="GO:0019013">
    <property type="term" value="C:viral nucleocapsid"/>
    <property type="evidence" value="ECO:0007669"/>
    <property type="project" value="UniProtKB-KW"/>
</dbReference>
<dbReference type="GO" id="GO:0003723">
    <property type="term" value="F:RNA binding"/>
    <property type="evidence" value="ECO:0007669"/>
    <property type="project" value="UniProtKB-KW"/>
</dbReference>
<dbReference type="GO" id="GO:0039660">
    <property type="term" value="F:structural constituent of virion"/>
    <property type="evidence" value="ECO:0007669"/>
    <property type="project" value="UniProtKB-KW"/>
</dbReference>
<dbReference type="GO" id="GO:0008270">
    <property type="term" value="F:zinc ion binding"/>
    <property type="evidence" value="ECO:0007669"/>
    <property type="project" value="UniProtKB-KW"/>
</dbReference>
<dbReference type="GO" id="GO:0019068">
    <property type="term" value="P:virion assembly"/>
    <property type="evidence" value="ECO:0007669"/>
    <property type="project" value="InterPro"/>
</dbReference>
<dbReference type="FunFam" id="1.10.375.10:FF:000008">
    <property type="entry name" value="Gag polyprotein"/>
    <property type="match status" value="1"/>
</dbReference>
<dbReference type="Gene3D" id="1.10.150.180">
    <property type="entry name" value="Gamma-retroviral matrix domain"/>
    <property type="match status" value="1"/>
</dbReference>
<dbReference type="Gene3D" id="1.10.375.10">
    <property type="entry name" value="Human Immunodeficiency Virus Type 1 Capsid Protein"/>
    <property type="match status" value="1"/>
</dbReference>
<dbReference type="Gene3D" id="4.10.60.10">
    <property type="entry name" value="Zinc finger, CCHC-type"/>
    <property type="match status" value="1"/>
</dbReference>
<dbReference type="InterPro" id="IPR000840">
    <property type="entry name" value="G_retro_matrix"/>
</dbReference>
<dbReference type="InterPro" id="IPR036946">
    <property type="entry name" value="G_retro_matrix_sf"/>
</dbReference>
<dbReference type="InterPro" id="IPR002079">
    <property type="entry name" value="Gag_p12"/>
</dbReference>
<dbReference type="InterPro" id="IPR003036">
    <property type="entry name" value="Gag_P30"/>
</dbReference>
<dbReference type="InterPro" id="IPR008919">
    <property type="entry name" value="Retrov_capsid_N"/>
</dbReference>
<dbReference type="InterPro" id="IPR050462">
    <property type="entry name" value="Retroviral_Gag-Pol_poly"/>
</dbReference>
<dbReference type="InterPro" id="IPR010999">
    <property type="entry name" value="Retrovr_matrix"/>
</dbReference>
<dbReference type="InterPro" id="IPR001878">
    <property type="entry name" value="Znf_CCHC"/>
</dbReference>
<dbReference type="InterPro" id="IPR036875">
    <property type="entry name" value="Znf_CCHC_sf"/>
</dbReference>
<dbReference type="PANTHER" id="PTHR33166">
    <property type="entry name" value="GAG_P30 DOMAIN-CONTAINING PROTEIN"/>
    <property type="match status" value="1"/>
</dbReference>
<dbReference type="Pfam" id="PF01140">
    <property type="entry name" value="Gag_MA"/>
    <property type="match status" value="1"/>
</dbReference>
<dbReference type="Pfam" id="PF01141">
    <property type="entry name" value="Gag_p12"/>
    <property type="match status" value="1"/>
</dbReference>
<dbReference type="Pfam" id="PF02093">
    <property type="entry name" value="Gag_p30"/>
    <property type="match status" value="1"/>
</dbReference>
<dbReference type="Pfam" id="PF00098">
    <property type="entry name" value="zf-CCHC"/>
    <property type="match status" value="1"/>
</dbReference>
<dbReference type="SMART" id="SM00343">
    <property type="entry name" value="ZnF_C2HC"/>
    <property type="match status" value="1"/>
</dbReference>
<dbReference type="SUPFAM" id="SSF47836">
    <property type="entry name" value="Retroviral matrix proteins"/>
    <property type="match status" value="1"/>
</dbReference>
<dbReference type="SUPFAM" id="SSF47943">
    <property type="entry name" value="Retrovirus capsid protein, N-terminal core domain"/>
    <property type="match status" value="1"/>
</dbReference>
<dbReference type="SUPFAM" id="SSF57756">
    <property type="entry name" value="Retrovirus zinc finger-like domains"/>
    <property type="match status" value="1"/>
</dbReference>
<dbReference type="PROSITE" id="PS50158">
    <property type="entry name" value="ZF_CCHC"/>
    <property type="match status" value="1"/>
</dbReference>
<evidence type="ECO:0000250" key="1"/>
<evidence type="ECO:0000250" key="2">
    <source>
        <dbReference type="UniProtKB" id="P03332"/>
    </source>
</evidence>
<evidence type="ECO:0000250" key="3">
    <source>
        <dbReference type="UniProtKB" id="P03336"/>
    </source>
</evidence>
<evidence type="ECO:0000255" key="4"/>
<evidence type="ECO:0000255" key="5">
    <source>
        <dbReference type="PROSITE-ProRule" id="PRU00047"/>
    </source>
</evidence>
<evidence type="ECO:0000256" key="6">
    <source>
        <dbReference type="SAM" id="MobiDB-lite"/>
    </source>
</evidence>
<evidence type="ECO:0000305" key="7"/>
<name>GAG_MLVDE</name>
<organism>
    <name type="scientific">Murine leukemia virus (strain DEF27)</name>
    <dbReference type="NCBI Taxonomy" id="31688"/>
    <lineage>
        <taxon>Viruses</taxon>
        <taxon>Riboviria</taxon>
        <taxon>Pararnavirae</taxon>
        <taxon>Artverviricota</taxon>
        <taxon>Revtraviricetes</taxon>
        <taxon>Ortervirales</taxon>
        <taxon>Retroviridae</taxon>
        <taxon>Orthoretrovirinae</taxon>
        <taxon>Gammaretrovirus</taxon>
        <taxon>Murine leukemia virus</taxon>
    </lineage>
</organism>
<gene>
    <name type="primary">gag</name>
</gene>
<accession>P29168</accession>
<organismHost>
    <name type="scientific">Mus musculus</name>
    <name type="common">Mouse</name>
    <dbReference type="NCBI Taxonomy" id="10090"/>
</organismHost>
<feature type="initiator methionine" description="Removed; by host" evidence="1">
    <location>
        <position position="1"/>
    </location>
</feature>
<feature type="chain" id="PRO_0000390809" description="Gag polyprotein" evidence="1">
    <location>
        <begin position="2"/>
        <end position="536"/>
    </location>
</feature>
<feature type="chain" id="PRO_0000040888" description="Matrix protein p15" evidence="4">
    <location>
        <begin position="2"/>
        <end position="129"/>
    </location>
</feature>
<feature type="chain" id="PRO_0000040889" description="RNA-binding phosphoprotein p12" evidence="4">
    <location>
        <begin position="130"/>
        <end position="213"/>
    </location>
</feature>
<feature type="chain" id="PRO_0000040890" description="Capsid protein p30" evidence="4">
    <location>
        <begin position="214"/>
        <end position="476"/>
    </location>
</feature>
<feature type="chain" id="PRO_0000040891" description="Nucleocapsid protein p10-gag" evidence="4">
    <location>
        <begin position="477"/>
        <end position="536"/>
    </location>
</feature>
<feature type="zinc finger region" description="CCHC-type" evidence="5">
    <location>
        <begin position="500"/>
        <end position="517"/>
    </location>
</feature>
<feature type="region of interest" description="Disordered" evidence="6">
    <location>
        <begin position="139"/>
        <end position="216"/>
    </location>
</feature>
<feature type="region of interest" description="Disordered" evidence="6">
    <location>
        <begin position="432"/>
        <end position="536"/>
    </location>
</feature>
<feature type="coiled-coil region" evidence="4">
    <location>
        <begin position="436"/>
        <end position="474"/>
    </location>
</feature>
<feature type="short sequence motif" description="PPXY motif" evidence="4">
    <location>
        <begin position="183"/>
        <end position="186"/>
    </location>
</feature>
<feature type="compositionally biased region" description="Basic and acidic residues" evidence="6">
    <location>
        <begin position="432"/>
        <end position="464"/>
    </location>
</feature>
<feature type="compositionally biased region" description="Basic and acidic residues" evidence="6">
    <location>
        <begin position="484"/>
        <end position="517"/>
    </location>
</feature>
<feature type="site" description="Cleavage; by viral protease p14" evidence="1">
    <location>
        <begin position="129"/>
        <end position="130"/>
    </location>
</feature>
<feature type="site" description="Cleavage; by viral protease p14" evidence="1">
    <location>
        <begin position="213"/>
        <end position="214"/>
    </location>
</feature>
<feature type="site" description="Cleavage; by viral protease p14" evidence="1">
    <location>
        <begin position="476"/>
        <end position="477"/>
    </location>
</feature>
<feature type="lipid moiety-binding region" description="N-myristoyl glycine; by host" evidence="1">
    <location>
        <position position="2"/>
    </location>
</feature>
<reference key="1">
    <citation type="journal article" date="1991" name="J. Virol.">
        <title>Characteristics and contributions of defective, ecotropic, and mink cell focus-inducing viruses involved in a retrovirus-induced immunodeficiency syndrome of mice.</title>
        <authorList>
            <person name="Chattopadhyay S.K."/>
            <person name="Sengupta D.N."/>
            <person name="Fredrickson T.N."/>
            <person name="Morse H.C. III"/>
            <person name="Hartley J.W."/>
        </authorList>
    </citation>
    <scope>NUCLEOTIDE SEQUENCE [GENOMIC DNA]</scope>
</reference>